<name>MRAY_STAAE</name>
<gene>
    <name evidence="1" type="primary">mraY</name>
    <name type="ordered locus">NWMN_1092</name>
</gene>
<evidence type="ECO:0000255" key="1">
    <source>
        <dbReference type="HAMAP-Rule" id="MF_00038"/>
    </source>
</evidence>
<keyword id="KW-0131">Cell cycle</keyword>
<keyword id="KW-0132">Cell division</keyword>
<keyword id="KW-1003">Cell membrane</keyword>
<keyword id="KW-0133">Cell shape</keyword>
<keyword id="KW-0961">Cell wall biogenesis/degradation</keyword>
<keyword id="KW-0460">Magnesium</keyword>
<keyword id="KW-0472">Membrane</keyword>
<keyword id="KW-0479">Metal-binding</keyword>
<keyword id="KW-0573">Peptidoglycan synthesis</keyword>
<keyword id="KW-0808">Transferase</keyword>
<keyword id="KW-0812">Transmembrane</keyword>
<keyword id="KW-1133">Transmembrane helix</keyword>
<proteinExistence type="inferred from homology"/>
<accession>A6QG82</accession>
<organism>
    <name type="scientific">Staphylococcus aureus (strain Newman)</name>
    <dbReference type="NCBI Taxonomy" id="426430"/>
    <lineage>
        <taxon>Bacteria</taxon>
        <taxon>Bacillati</taxon>
        <taxon>Bacillota</taxon>
        <taxon>Bacilli</taxon>
        <taxon>Bacillales</taxon>
        <taxon>Staphylococcaceae</taxon>
        <taxon>Staphylococcus</taxon>
    </lineage>
</organism>
<sequence>MIFVYALLALVITFVLVPVLIPTLKRMKFGQSIREEGPQSHMKKTGTPTMGGLTFLLSIVITSLVAIIFVDQANPIILLLFVTIGFGLIGFIDDYIIVVKKNNQGLTSKQKFLAQIGIAIIFFVLSNVFHLVNFSTSIHIPFTNVAIPLSFAYVIFIVFWQVGFSNAVNLTDGLDGLATGLSIIGFTMYAIMSFVLGETAIGIFCIIMLFALLGFLPYNINPAKVFMGDTGSLALGGIFATISIMLNQELSLIFIGLVFVIETLSVMLQVASFKLTGKRIFKMSPIHHHFELIGWSEWKVVTVFWAVGLISGLIGLWIGVH</sequence>
<reference key="1">
    <citation type="journal article" date="2008" name="J. Bacteriol.">
        <title>Genome sequence of Staphylococcus aureus strain Newman and comparative analysis of staphylococcal genomes: polymorphism and evolution of two major pathogenicity islands.</title>
        <authorList>
            <person name="Baba T."/>
            <person name="Bae T."/>
            <person name="Schneewind O."/>
            <person name="Takeuchi F."/>
            <person name="Hiramatsu K."/>
        </authorList>
    </citation>
    <scope>NUCLEOTIDE SEQUENCE [LARGE SCALE GENOMIC DNA]</scope>
    <source>
        <strain>Newman</strain>
    </source>
</reference>
<protein>
    <recommendedName>
        <fullName evidence="1">Phospho-N-acetylmuramoyl-pentapeptide-transferase</fullName>
        <ecNumber evidence="1">2.7.8.13</ecNumber>
    </recommendedName>
    <alternativeName>
        <fullName evidence="1">UDP-MurNAc-pentapeptide phosphotransferase</fullName>
    </alternativeName>
</protein>
<feature type="chain" id="PRO_1000071053" description="Phospho-N-acetylmuramoyl-pentapeptide-transferase">
    <location>
        <begin position="1"/>
        <end position="321"/>
    </location>
</feature>
<feature type="transmembrane region" description="Helical" evidence="1">
    <location>
        <begin position="1"/>
        <end position="21"/>
    </location>
</feature>
<feature type="transmembrane region" description="Helical" evidence="1">
    <location>
        <begin position="50"/>
        <end position="70"/>
    </location>
</feature>
<feature type="transmembrane region" description="Helical" evidence="1">
    <location>
        <begin position="76"/>
        <end position="96"/>
    </location>
</feature>
<feature type="transmembrane region" description="Helical" evidence="1">
    <location>
        <begin position="112"/>
        <end position="132"/>
    </location>
</feature>
<feature type="transmembrane region" description="Helical" evidence="1">
    <location>
        <begin position="140"/>
        <end position="160"/>
    </location>
</feature>
<feature type="transmembrane region" description="Helical" evidence="1">
    <location>
        <begin position="176"/>
        <end position="196"/>
    </location>
</feature>
<feature type="transmembrane region" description="Helical" evidence="1">
    <location>
        <begin position="200"/>
        <end position="220"/>
    </location>
</feature>
<feature type="transmembrane region" description="Helical" evidence="1">
    <location>
        <begin position="225"/>
        <end position="245"/>
    </location>
</feature>
<feature type="transmembrane region" description="Helical" evidence="1">
    <location>
        <begin position="250"/>
        <end position="270"/>
    </location>
</feature>
<feature type="transmembrane region" description="Helical" evidence="1">
    <location>
        <begin position="300"/>
        <end position="320"/>
    </location>
</feature>
<comment type="function">
    <text evidence="1">Catalyzes the initial step of the lipid cycle reactions in the biosynthesis of the cell wall peptidoglycan: transfers peptidoglycan precursor phospho-MurNAc-pentapeptide from UDP-MurNAc-pentapeptide onto the lipid carrier undecaprenyl phosphate, yielding undecaprenyl-pyrophosphoryl-MurNAc-pentapeptide, known as lipid I.</text>
</comment>
<comment type="catalytic activity">
    <reaction evidence="1">
        <text>UDP-N-acetyl-alpha-D-muramoyl-L-alanyl-gamma-D-glutamyl-L-lysyl-D-alanyl-D-alanine + di-trans,octa-cis-undecaprenyl phosphate = Mur2Ac(oyl-L-Ala-gamma-D-Glu-L-Lys-D-Ala-D-Ala)-di-trans,octa-cis-undecaprenyl diphosphate + UMP</text>
        <dbReference type="Rhea" id="RHEA:21920"/>
        <dbReference type="ChEBI" id="CHEBI:57865"/>
        <dbReference type="ChEBI" id="CHEBI:60032"/>
        <dbReference type="ChEBI" id="CHEBI:60392"/>
        <dbReference type="ChEBI" id="CHEBI:70758"/>
        <dbReference type="EC" id="2.7.8.13"/>
    </reaction>
</comment>
<comment type="cofactor">
    <cofactor evidence="1">
        <name>Mg(2+)</name>
        <dbReference type="ChEBI" id="CHEBI:18420"/>
    </cofactor>
</comment>
<comment type="pathway">
    <text evidence="1">Cell wall biogenesis; peptidoglycan biosynthesis.</text>
</comment>
<comment type="subcellular location">
    <subcellularLocation>
        <location evidence="1">Cell membrane</location>
        <topology evidence="1">Multi-pass membrane protein</topology>
    </subcellularLocation>
</comment>
<comment type="similarity">
    <text evidence="1">Belongs to the glycosyltransferase 4 family. MraY subfamily.</text>
</comment>
<dbReference type="EC" id="2.7.8.13" evidence="1"/>
<dbReference type="EMBL" id="AP009351">
    <property type="protein sequence ID" value="BAF67364.1"/>
    <property type="molecule type" value="Genomic_DNA"/>
</dbReference>
<dbReference type="RefSeq" id="WP_000578458.1">
    <property type="nucleotide sequence ID" value="NZ_JBBIAE010000001.1"/>
</dbReference>
<dbReference type="SMR" id="A6QG82"/>
<dbReference type="KEGG" id="sae:NWMN_1092"/>
<dbReference type="HOGENOM" id="CLU_023982_0_1_9"/>
<dbReference type="UniPathway" id="UPA00219"/>
<dbReference type="Proteomes" id="UP000006386">
    <property type="component" value="Chromosome"/>
</dbReference>
<dbReference type="GO" id="GO:0005886">
    <property type="term" value="C:plasma membrane"/>
    <property type="evidence" value="ECO:0007669"/>
    <property type="project" value="UniProtKB-SubCell"/>
</dbReference>
<dbReference type="GO" id="GO:0046872">
    <property type="term" value="F:metal ion binding"/>
    <property type="evidence" value="ECO:0007669"/>
    <property type="project" value="UniProtKB-KW"/>
</dbReference>
<dbReference type="GO" id="GO:0008963">
    <property type="term" value="F:phospho-N-acetylmuramoyl-pentapeptide-transferase activity"/>
    <property type="evidence" value="ECO:0007669"/>
    <property type="project" value="UniProtKB-UniRule"/>
</dbReference>
<dbReference type="GO" id="GO:0051301">
    <property type="term" value="P:cell division"/>
    <property type="evidence" value="ECO:0007669"/>
    <property type="project" value="UniProtKB-KW"/>
</dbReference>
<dbReference type="GO" id="GO:0071555">
    <property type="term" value="P:cell wall organization"/>
    <property type="evidence" value="ECO:0007669"/>
    <property type="project" value="UniProtKB-KW"/>
</dbReference>
<dbReference type="GO" id="GO:0009252">
    <property type="term" value="P:peptidoglycan biosynthetic process"/>
    <property type="evidence" value="ECO:0007669"/>
    <property type="project" value="UniProtKB-UniRule"/>
</dbReference>
<dbReference type="GO" id="GO:0008360">
    <property type="term" value="P:regulation of cell shape"/>
    <property type="evidence" value="ECO:0007669"/>
    <property type="project" value="UniProtKB-KW"/>
</dbReference>
<dbReference type="CDD" id="cd06852">
    <property type="entry name" value="GT_MraY"/>
    <property type="match status" value="1"/>
</dbReference>
<dbReference type="HAMAP" id="MF_00038">
    <property type="entry name" value="MraY"/>
    <property type="match status" value="1"/>
</dbReference>
<dbReference type="InterPro" id="IPR000715">
    <property type="entry name" value="Glycosyl_transferase_4"/>
</dbReference>
<dbReference type="InterPro" id="IPR003524">
    <property type="entry name" value="PNAcMuramoyl-5peptid_Trfase"/>
</dbReference>
<dbReference type="InterPro" id="IPR018480">
    <property type="entry name" value="PNAcMuramoyl-5peptid_Trfase_CS"/>
</dbReference>
<dbReference type="NCBIfam" id="TIGR00445">
    <property type="entry name" value="mraY"/>
    <property type="match status" value="1"/>
</dbReference>
<dbReference type="PANTHER" id="PTHR22926">
    <property type="entry name" value="PHOSPHO-N-ACETYLMURAMOYL-PENTAPEPTIDE-TRANSFERASE"/>
    <property type="match status" value="1"/>
</dbReference>
<dbReference type="PANTHER" id="PTHR22926:SF5">
    <property type="entry name" value="PHOSPHO-N-ACETYLMURAMOYL-PENTAPEPTIDE-TRANSFERASE HOMOLOG"/>
    <property type="match status" value="1"/>
</dbReference>
<dbReference type="Pfam" id="PF00953">
    <property type="entry name" value="Glycos_transf_4"/>
    <property type="match status" value="1"/>
</dbReference>
<dbReference type="PROSITE" id="PS01347">
    <property type="entry name" value="MRAY_1"/>
    <property type="match status" value="1"/>
</dbReference>
<dbReference type="PROSITE" id="PS01348">
    <property type="entry name" value="MRAY_2"/>
    <property type="match status" value="1"/>
</dbReference>